<evidence type="ECO:0000255" key="1">
    <source>
        <dbReference type="HAMAP-Rule" id="MF_01356"/>
    </source>
</evidence>
<organism>
    <name type="scientific">Yersinia pestis</name>
    <dbReference type="NCBI Taxonomy" id="632"/>
    <lineage>
        <taxon>Bacteria</taxon>
        <taxon>Pseudomonadati</taxon>
        <taxon>Pseudomonadota</taxon>
        <taxon>Gammaproteobacteria</taxon>
        <taxon>Enterobacterales</taxon>
        <taxon>Yersiniaceae</taxon>
        <taxon>Yersinia</taxon>
    </lineage>
</organism>
<accession>Q7CJ93</accession>
<accession>Q74T28</accession>
<dbReference type="EC" id="7.1.1.-" evidence="1"/>
<dbReference type="EMBL" id="AE009952">
    <property type="protein sequence ID" value="AAM85200.1"/>
    <property type="molecule type" value="Genomic_DNA"/>
</dbReference>
<dbReference type="EMBL" id="AE017042">
    <property type="protein sequence ID" value="AAS62570.1"/>
    <property type="molecule type" value="Genomic_DNA"/>
</dbReference>
<dbReference type="EMBL" id="AL590842">
    <property type="protein sequence ID" value="CAL21179.1"/>
    <property type="molecule type" value="Genomic_DNA"/>
</dbReference>
<dbReference type="PIR" id="AH0311">
    <property type="entry name" value="AH0311"/>
</dbReference>
<dbReference type="RefSeq" id="WP_002210278.1">
    <property type="nucleotide sequence ID" value="NZ_WUCM01000021.1"/>
</dbReference>
<dbReference type="RefSeq" id="YP_002347515.1">
    <property type="nucleotide sequence ID" value="NC_003143.1"/>
</dbReference>
<dbReference type="SMR" id="Q7CJ93"/>
<dbReference type="STRING" id="214092.YPO2554"/>
<dbReference type="PaxDb" id="214092-YPO2554"/>
<dbReference type="DNASU" id="1146578"/>
<dbReference type="EnsemblBacteria" id="AAS62570">
    <property type="protein sequence ID" value="AAS62570"/>
    <property type="gene ID" value="YP_2365"/>
</dbReference>
<dbReference type="KEGG" id="ype:YPO2554"/>
<dbReference type="KEGG" id="ypk:y1631"/>
<dbReference type="KEGG" id="ypm:YP_2365"/>
<dbReference type="PATRIC" id="fig|214092.21.peg.2978"/>
<dbReference type="eggNOG" id="COG0377">
    <property type="taxonomic scope" value="Bacteria"/>
</dbReference>
<dbReference type="HOGENOM" id="CLU_055737_7_3_6"/>
<dbReference type="OMA" id="CGGPYWE"/>
<dbReference type="OrthoDB" id="9786737at2"/>
<dbReference type="Proteomes" id="UP000000815">
    <property type="component" value="Chromosome"/>
</dbReference>
<dbReference type="Proteomes" id="UP000001019">
    <property type="component" value="Chromosome"/>
</dbReference>
<dbReference type="Proteomes" id="UP000002490">
    <property type="component" value="Chromosome"/>
</dbReference>
<dbReference type="GO" id="GO:0005886">
    <property type="term" value="C:plasma membrane"/>
    <property type="evidence" value="ECO:0007669"/>
    <property type="project" value="UniProtKB-SubCell"/>
</dbReference>
<dbReference type="GO" id="GO:0045271">
    <property type="term" value="C:respiratory chain complex I"/>
    <property type="evidence" value="ECO:0000318"/>
    <property type="project" value="GO_Central"/>
</dbReference>
<dbReference type="GO" id="GO:0051539">
    <property type="term" value="F:4 iron, 4 sulfur cluster binding"/>
    <property type="evidence" value="ECO:0007669"/>
    <property type="project" value="UniProtKB-KW"/>
</dbReference>
<dbReference type="GO" id="GO:0005506">
    <property type="term" value="F:iron ion binding"/>
    <property type="evidence" value="ECO:0007669"/>
    <property type="project" value="UniProtKB-UniRule"/>
</dbReference>
<dbReference type="GO" id="GO:0008137">
    <property type="term" value="F:NADH dehydrogenase (ubiquinone) activity"/>
    <property type="evidence" value="ECO:0000318"/>
    <property type="project" value="GO_Central"/>
</dbReference>
<dbReference type="GO" id="GO:0050136">
    <property type="term" value="F:NADH:ubiquinone reductase (non-electrogenic) activity"/>
    <property type="evidence" value="ECO:0007669"/>
    <property type="project" value="UniProtKB-UniRule"/>
</dbReference>
<dbReference type="GO" id="GO:0048038">
    <property type="term" value="F:quinone binding"/>
    <property type="evidence" value="ECO:0007669"/>
    <property type="project" value="UniProtKB-KW"/>
</dbReference>
<dbReference type="GO" id="GO:0009060">
    <property type="term" value="P:aerobic respiration"/>
    <property type="evidence" value="ECO:0000318"/>
    <property type="project" value="GO_Central"/>
</dbReference>
<dbReference type="GO" id="GO:0015990">
    <property type="term" value="P:electron transport coupled proton transport"/>
    <property type="evidence" value="ECO:0000318"/>
    <property type="project" value="GO_Central"/>
</dbReference>
<dbReference type="FunFam" id="3.40.50.12280:FF:000002">
    <property type="entry name" value="NADH-quinone oxidoreductase subunit B"/>
    <property type="match status" value="1"/>
</dbReference>
<dbReference type="Gene3D" id="3.40.50.12280">
    <property type="match status" value="1"/>
</dbReference>
<dbReference type="HAMAP" id="MF_01356">
    <property type="entry name" value="NDH1_NuoB"/>
    <property type="match status" value="1"/>
</dbReference>
<dbReference type="InterPro" id="IPR006137">
    <property type="entry name" value="NADH_UbQ_OxRdtase-like_20kDa"/>
</dbReference>
<dbReference type="InterPro" id="IPR006138">
    <property type="entry name" value="NADH_UQ_OxRdtase_20Kd_su"/>
</dbReference>
<dbReference type="NCBIfam" id="TIGR01957">
    <property type="entry name" value="nuoB_fam"/>
    <property type="match status" value="1"/>
</dbReference>
<dbReference type="NCBIfam" id="NF005012">
    <property type="entry name" value="PRK06411.1"/>
    <property type="match status" value="1"/>
</dbReference>
<dbReference type="PANTHER" id="PTHR11995">
    <property type="entry name" value="NADH DEHYDROGENASE"/>
    <property type="match status" value="1"/>
</dbReference>
<dbReference type="PANTHER" id="PTHR11995:SF14">
    <property type="entry name" value="NADH DEHYDROGENASE [UBIQUINONE] IRON-SULFUR PROTEIN 7, MITOCHONDRIAL"/>
    <property type="match status" value="1"/>
</dbReference>
<dbReference type="Pfam" id="PF01058">
    <property type="entry name" value="Oxidored_q6"/>
    <property type="match status" value="1"/>
</dbReference>
<dbReference type="SUPFAM" id="SSF56770">
    <property type="entry name" value="HydA/Nqo6-like"/>
    <property type="match status" value="1"/>
</dbReference>
<dbReference type="PROSITE" id="PS01150">
    <property type="entry name" value="COMPLEX1_20K"/>
    <property type="match status" value="1"/>
</dbReference>
<reference key="1">
    <citation type="journal article" date="2002" name="J. Bacteriol.">
        <title>Genome sequence of Yersinia pestis KIM.</title>
        <authorList>
            <person name="Deng W."/>
            <person name="Burland V."/>
            <person name="Plunkett G. III"/>
            <person name="Boutin A."/>
            <person name="Mayhew G.F."/>
            <person name="Liss P."/>
            <person name="Perna N.T."/>
            <person name="Rose D.J."/>
            <person name="Mau B."/>
            <person name="Zhou S."/>
            <person name="Schwartz D.C."/>
            <person name="Fetherston J.D."/>
            <person name="Lindler L.E."/>
            <person name="Brubaker R.R."/>
            <person name="Plano G.V."/>
            <person name="Straley S.C."/>
            <person name="McDonough K.A."/>
            <person name="Nilles M.L."/>
            <person name="Matson J.S."/>
            <person name="Blattner F.R."/>
            <person name="Perry R.D."/>
        </authorList>
    </citation>
    <scope>NUCLEOTIDE SEQUENCE [LARGE SCALE GENOMIC DNA]</scope>
    <source>
        <strain>KIM10+ / Biovar Mediaevalis</strain>
    </source>
</reference>
<reference key="2">
    <citation type="journal article" date="2001" name="Nature">
        <title>Genome sequence of Yersinia pestis, the causative agent of plague.</title>
        <authorList>
            <person name="Parkhill J."/>
            <person name="Wren B.W."/>
            <person name="Thomson N.R."/>
            <person name="Titball R.W."/>
            <person name="Holden M.T.G."/>
            <person name="Prentice M.B."/>
            <person name="Sebaihia M."/>
            <person name="James K.D."/>
            <person name="Churcher C.M."/>
            <person name="Mungall K.L."/>
            <person name="Baker S."/>
            <person name="Basham D."/>
            <person name="Bentley S.D."/>
            <person name="Brooks K."/>
            <person name="Cerdeno-Tarraga A.-M."/>
            <person name="Chillingworth T."/>
            <person name="Cronin A."/>
            <person name="Davies R.M."/>
            <person name="Davis P."/>
            <person name="Dougan G."/>
            <person name="Feltwell T."/>
            <person name="Hamlin N."/>
            <person name="Holroyd S."/>
            <person name="Jagels K."/>
            <person name="Karlyshev A.V."/>
            <person name="Leather S."/>
            <person name="Moule S."/>
            <person name="Oyston P.C.F."/>
            <person name="Quail M.A."/>
            <person name="Rutherford K.M."/>
            <person name="Simmonds M."/>
            <person name="Skelton J."/>
            <person name="Stevens K."/>
            <person name="Whitehead S."/>
            <person name="Barrell B.G."/>
        </authorList>
    </citation>
    <scope>NUCLEOTIDE SEQUENCE [LARGE SCALE GENOMIC DNA]</scope>
    <source>
        <strain>CO-92 / Biovar Orientalis</strain>
    </source>
</reference>
<reference key="3">
    <citation type="journal article" date="2004" name="DNA Res.">
        <title>Complete genome sequence of Yersinia pestis strain 91001, an isolate avirulent to humans.</title>
        <authorList>
            <person name="Song Y."/>
            <person name="Tong Z."/>
            <person name="Wang J."/>
            <person name="Wang L."/>
            <person name="Guo Z."/>
            <person name="Han Y."/>
            <person name="Zhang J."/>
            <person name="Pei D."/>
            <person name="Zhou D."/>
            <person name="Qin H."/>
            <person name="Pang X."/>
            <person name="Han Y."/>
            <person name="Zhai J."/>
            <person name="Li M."/>
            <person name="Cui B."/>
            <person name="Qi Z."/>
            <person name="Jin L."/>
            <person name="Dai R."/>
            <person name="Chen F."/>
            <person name="Li S."/>
            <person name="Ye C."/>
            <person name="Du Z."/>
            <person name="Lin W."/>
            <person name="Wang J."/>
            <person name="Yu J."/>
            <person name="Yang H."/>
            <person name="Wang J."/>
            <person name="Huang P."/>
            <person name="Yang R."/>
        </authorList>
    </citation>
    <scope>NUCLEOTIDE SEQUENCE [LARGE SCALE GENOMIC DNA]</scope>
    <source>
        <strain>91001 / Biovar Mediaevalis</strain>
    </source>
</reference>
<feature type="chain" id="PRO_0000376410" description="NADH-quinone oxidoreductase subunit B">
    <location>
        <begin position="1"/>
        <end position="225"/>
    </location>
</feature>
<feature type="binding site" evidence="1">
    <location>
        <position position="68"/>
    </location>
    <ligand>
        <name>[4Fe-4S] cluster</name>
        <dbReference type="ChEBI" id="CHEBI:49883"/>
    </ligand>
</feature>
<feature type="binding site" evidence="1">
    <location>
        <position position="69"/>
    </location>
    <ligand>
        <name>[4Fe-4S] cluster</name>
        <dbReference type="ChEBI" id="CHEBI:49883"/>
    </ligand>
</feature>
<feature type="binding site" evidence="1">
    <location>
        <position position="134"/>
    </location>
    <ligand>
        <name>[4Fe-4S] cluster</name>
        <dbReference type="ChEBI" id="CHEBI:49883"/>
    </ligand>
</feature>
<feature type="binding site" evidence="1">
    <location>
        <position position="163"/>
    </location>
    <ligand>
        <name>[4Fe-4S] cluster</name>
        <dbReference type="ChEBI" id="CHEBI:49883"/>
    </ligand>
</feature>
<protein>
    <recommendedName>
        <fullName evidence="1">NADH-quinone oxidoreductase subunit B</fullName>
        <ecNumber evidence="1">7.1.1.-</ecNumber>
    </recommendedName>
    <alternativeName>
        <fullName evidence="1">NADH dehydrogenase I subunit B</fullName>
    </alternativeName>
    <alternativeName>
        <fullName evidence="1">NDH-1 subunit B</fullName>
    </alternativeName>
</protein>
<name>NUOB_YERPE</name>
<comment type="function">
    <text evidence="1">NDH-1 shuttles electrons from NADH, via FMN and iron-sulfur (Fe-S) centers, to quinones in the respiratory chain. The immediate electron acceptor for the enzyme in this species is believed to be ubiquinone. Couples the redox reaction to proton translocation (for every two electrons transferred, four hydrogen ions are translocated across the cytoplasmic membrane), and thus conserves the redox energy in a proton gradient.</text>
</comment>
<comment type="catalytic activity">
    <reaction evidence="1">
        <text>a quinone + NADH + 5 H(+)(in) = a quinol + NAD(+) + 4 H(+)(out)</text>
        <dbReference type="Rhea" id="RHEA:57888"/>
        <dbReference type="ChEBI" id="CHEBI:15378"/>
        <dbReference type="ChEBI" id="CHEBI:24646"/>
        <dbReference type="ChEBI" id="CHEBI:57540"/>
        <dbReference type="ChEBI" id="CHEBI:57945"/>
        <dbReference type="ChEBI" id="CHEBI:132124"/>
    </reaction>
</comment>
<comment type="cofactor">
    <cofactor evidence="1">
        <name>[4Fe-4S] cluster</name>
        <dbReference type="ChEBI" id="CHEBI:49883"/>
    </cofactor>
    <text evidence="1">Binds 1 [4Fe-4S] cluster.</text>
</comment>
<comment type="subunit">
    <text evidence="1">NDH-1 is composed of 13 different subunits. Subunits NuoB, CD, E, F, and G constitute the peripheral sector of the complex.</text>
</comment>
<comment type="subcellular location">
    <subcellularLocation>
        <location evidence="1">Cell inner membrane</location>
        <topology evidence="1">Peripheral membrane protein</topology>
        <orientation evidence="1">Cytoplasmic side</orientation>
    </subcellularLocation>
</comment>
<comment type="similarity">
    <text evidence="1">Belongs to the complex I 20 kDa subunit family.</text>
</comment>
<keyword id="KW-0004">4Fe-4S</keyword>
<keyword id="KW-0997">Cell inner membrane</keyword>
<keyword id="KW-1003">Cell membrane</keyword>
<keyword id="KW-0408">Iron</keyword>
<keyword id="KW-0411">Iron-sulfur</keyword>
<keyword id="KW-0472">Membrane</keyword>
<keyword id="KW-0479">Metal-binding</keyword>
<keyword id="KW-0520">NAD</keyword>
<keyword id="KW-0874">Quinone</keyword>
<keyword id="KW-1185">Reference proteome</keyword>
<keyword id="KW-1278">Translocase</keyword>
<keyword id="KW-0813">Transport</keyword>
<keyword id="KW-0830">Ubiquinone</keyword>
<sequence>MDYTLTRIDPNGENDRYPLQTQETVSGDPLEQHVHRSVYMGKLENAMHDMVNWGRKNSLWPYNFGLSCCYVEMVTSFTAVHDVARFGAEVLRASPRQADFMVVAGTCFTKMAPVIQRLYEQMLEPKWVISMGACANSGGMYDIYSVVQGVDKFLPVDVYIPGCPPRPEAYMQALLLLQESIGKERRPLSWVVGDQGVYRANMQPERERKHAERIAVTNLRTPDEI</sequence>
<proteinExistence type="inferred from homology"/>
<gene>
    <name evidence="1" type="primary">nuoB</name>
    <name type="ordered locus">YPO2554</name>
    <name type="ordered locus">y1631</name>
    <name type="ordered locus">YP_2365</name>
</gene>